<proteinExistence type="inferred from homology"/>
<reference key="1">
    <citation type="journal article" date="1999" name="Science">
        <title>Genome sequence of the radioresistant bacterium Deinococcus radiodurans R1.</title>
        <authorList>
            <person name="White O."/>
            <person name="Eisen J.A."/>
            <person name="Heidelberg J.F."/>
            <person name="Hickey E.K."/>
            <person name="Peterson J.D."/>
            <person name="Dodson R.J."/>
            <person name="Haft D.H."/>
            <person name="Gwinn M.L."/>
            <person name="Nelson W.C."/>
            <person name="Richardson D.L."/>
            <person name="Moffat K.S."/>
            <person name="Qin H."/>
            <person name="Jiang L."/>
            <person name="Pamphile W."/>
            <person name="Crosby M."/>
            <person name="Shen M."/>
            <person name="Vamathevan J.J."/>
            <person name="Lam P."/>
            <person name="McDonald L.A."/>
            <person name="Utterback T.R."/>
            <person name="Zalewski C."/>
            <person name="Makarova K.S."/>
            <person name="Aravind L."/>
            <person name="Daly M.J."/>
            <person name="Minton K.W."/>
            <person name="Fleischmann R.D."/>
            <person name="Ketchum K.A."/>
            <person name="Nelson K.E."/>
            <person name="Salzberg S.L."/>
            <person name="Smith H.O."/>
            <person name="Venter J.C."/>
            <person name="Fraser C.M."/>
        </authorList>
    </citation>
    <scope>NUCLEOTIDE SEQUENCE [LARGE SCALE GENOMIC DNA]</scope>
    <source>
        <strain>ATCC 13939 / DSM 20539 / JCM 16871 / CCUG 27074 / LMG 4051 / NBRC 15346 / NCIMB 9279 / VKM B-1422 / R1</strain>
    </source>
</reference>
<accession>Q9RTK1</accession>
<protein>
    <recommendedName>
        <fullName evidence="1">tRNA-specific 2-thiouridylase MnmA</fullName>
        <ecNumber evidence="1">2.8.1.13</ecNumber>
    </recommendedName>
</protein>
<name>MNMA_DEIRA</name>
<organism>
    <name type="scientific">Deinococcus radiodurans (strain ATCC 13939 / DSM 20539 / JCM 16871 / CCUG 27074 / LMG 4051 / NBRC 15346 / NCIMB 9279 / VKM B-1422 / R1)</name>
    <dbReference type="NCBI Taxonomy" id="243230"/>
    <lineage>
        <taxon>Bacteria</taxon>
        <taxon>Thermotogati</taxon>
        <taxon>Deinococcota</taxon>
        <taxon>Deinococci</taxon>
        <taxon>Deinococcales</taxon>
        <taxon>Deinococcaceae</taxon>
        <taxon>Deinococcus</taxon>
    </lineage>
</organism>
<feature type="chain" id="PRO_0000121631" description="tRNA-specific 2-thiouridylase MnmA">
    <location>
        <begin position="1"/>
        <end position="380"/>
    </location>
</feature>
<feature type="region of interest" description="Interaction with tRNA" evidence="1">
    <location>
        <begin position="166"/>
        <end position="168"/>
    </location>
</feature>
<feature type="region of interest" description="Interaction with tRNA" evidence="1">
    <location>
        <begin position="320"/>
        <end position="321"/>
    </location>
</feature>
<feature type="active site" description="Nucleophile" evidence="1">
    <location>
        <position position="119"/>
    </location>
</feature>
<feature type="active site" description="Cysteine persulfide intermediate" evidence="1">
    <location>
        <position position="216"/>
    </location>
</feature>
<feature type="binding site" evidence="1">
    <location>
        <begin position="25"/>
        <end position="32"/>
    </location>
    <ligand>
        <name>ATP</name>
        <dbReference type="ChEBI" id="CHEBI:30616"/>
    </ligand>
</feature>
<feature type="binding site" evidence="1">
    <location>
        <position position="51"/>
    </location>
    <ligand>
        <name>ATP</name>
        <dbReference type="ChEBI" id="CHEBI:30616"/>
    </ligand>
</feature>
<feature type="binding site" evidence="1">
    <location>
        <position position="143"/>
    </location>
    <ligand>
        <name>ATP</name>
        <dbReference type="ChEBI" id="CHEBI:30616"/>
    </ligand>
</feature>
<feature type="site" description="Interaction with tRNA" evidence="1">
    <location>
        <position position="144"/>
    </location>
</feature>
<feature type="site" description="Interaction with tRNA" evidence="1">
    <location>
        <position position="353"/>
    </location>
</feature>
<feature type="disulfide bond" description="Alternate" evidence="1">
    <location>
        <begin position="119"/>
        <end position="216"/>
    </location>
</feature>
<comment type="function">
    <text evidence="1">Catalyzes the 2-thiolation of uridine at the wobble position (U34) of tRNA, leading to the formation of s(2)U34.</text>
</comment>
<comment type="catalytic activity">
    <reaction evidence="1">
        <text>S-sulfanyl-L-cysteinyl-[protein] + uridine(34) in tRNA + AH2 + ATP = 2-thiouridine(34) in tRNA + L-cysteinyl-[protein] + A + AMP + diphosphate + H(+)</text>
        <dbReference type="Rhea" id="RHEA:47032"/>
        <dbReference type="Rhea" id="RHEA-COMP:10131"/>
        <dbReference type="Rhea" id="RHEA-COMP:11726"/>
        <dbReference type="Rhea" id="RHEA-COMP:11727"/>
        <dbReference type="Rhea" id="RHEA-COMP:11728"/>
        <dbReference type="ChEBI" id="CHEBI:13193"/>
        <dbReference type="ChEBI" id="CHEBI:15378"/>
        <dbReference type="ChEBI" id="CHEBI:17499"/>
        <dbReference type="ChEBI" id="CHEBI:29950"/>
        <dbReference type="ChEBI" id="CHEBI:30616"/>
        <dbReference type="ChEBI" id="CHEBI:33019"/>
        <dbReference type="ChEBI" id="CHEBI:61963"/>
        <dbReference type="ChEBI" id="CHEBI:65315"/>
        <dbReference type="ChEBI" id="CHEBI:87170"/>
        <dbReference type="ChEBI" id="CHEBI:456215"/>
        <dbReference type="EC" id="2.8.1.13"/>
    </reaction>
</comment>
<comment type="subcellular location">
    <subcellularLocation>
        <location evidence="1">Cytoplasm</location>
    </subcellularLocation>
</comment>
<comment type="similarity">
    <text evidence="1">Belongs to the MnmA/TRMU family.</text>
</comment>
<comment type="sequence caution" evidence="2">
    <conflict type="erroneous initiation">
        <sequence resource="EMBL-CDS" id="AAF11314"/>
    </conflict>
</comment>
<evidence type="ECO:0000255" key="1">
    <source>
        <dbReference type="HAMAP-Rule" id="MF_00144"/>
    </source>
</evidence>
<evidence type="ECO:0000305" key="2"/>
<dbReference type="EC" id="2.8.1.13" evidence="1"/>
<dbReference type="EMBL" id="AE000513">
    <property type="protein sequence ID" value="AAF11314.1"/>
    <property type="status" value="ALT_INIT"/>
    <property type="molecule type" value="Genomic_DNA"/>
</dbReference>
<dbReference type="PIR" id="H75357">
    <property type="entry name" value="H75357"/>
</dbReference>
<dbReference type="RefSeq" id="NP_295482.1">
    <property type="nucleotide sequence ID" value="NC_001263.1"/>
</dbReference>
<dbReference type="RefSeq" id="WP_027480311.1">
    <property type="nucleotide sequence ID" value="NC_001263.1"/>
</dbReference>
<dbReference type="SMR" id="Q9RTK1"/>
<dbReference type="FunCoup" id="Q9RTK1">
    <property type="interactions" value="437"/>
</dbReference>
<dbReference type="STRING" id="243230.DR_1759"/>
<dbReference type="PaxDb" id="243230-DR_1759"/>
<dbReference type="EnsemblBacteria" id="AAF11314">
    <property type="protein sequence ID" value="AAF11314"/>
    <property type="gene ID" value="DR_1759"/>
</dbReference>
<dbReference type="GeneID" id="69517998"/>
<dbReference type="KEGG" id="dra:DR_1759"/>
<dbReference type="PATRIC" id="fig|243230.17.peg.1969"/>
<dbReference type="eggNOG" id="COG0482">
    <property type="taxonomic scope" value="Bacteria"/>
</dbReference>
<dbReference type="HOGENOM" id="CLU_035188_0_0_0"/>
<dbReference type="InParanoid" id="Q9RTK1"/>
<dbReference type="OrthoDB" id="9800696at2"/>
<dbReference type="Proteomes" id="UP000002524">
    <property type="component" value="Chromosome 1"/>
</dbReference>
<dbReference type="GO" id="GO:0005737">
    <property type="term" value="C:cytoplasm"/>
    <property type="evidence" value="ECO:0007669"/>
    <property type="project" value="UniProtKB-SubCell"/>
</dbReference>
<dbReference type="GO" id="GO:0005524">
    <property type="term" value="F:ATP binding"/>
    <property type="evidence" value="ECO:0007669"/>
    <property type="project" value="UniProtKB-KW"/>
</dbReference>
<dbReference type="GO" id="GO:0000049">
    <property type="term" value="F:tRNA binding"/>
    <property type="evidence" value="ECO:0007669"/>
    <property type="project" value="UniProtKB-KW"/>
</dbReference>
<dbReference type="GO" id="GO:0103016">
    <property type="term" value="F:tRNA-uridine 2-sulfurtransferase activity"/>
    <property type="evidence" value="ECO:0007669"/>
    <property type="project" value="UniProtKB-EC"/>
</dbReference>
<dbReference type="GO" id="GO:0002143">
    <property type="term" value="P:tRNA wobble position uridine thiolation"/>
    <property type="evidence" value="ECO:0000318"/>
    <property type="project" value="GO_Central"/>
</dbReference>
<dbReference type="CDD" id="cd01998">
    <property type="entry name" value="MnmA_TRMU-like"/>
    <property type="match status" value="1"/>
</dbReference>
<dbReference type="FunFam" id="2.40.30.10:FF:000023">
    <property type="entry name" value="tRNA-specific 2-thiouridylase MnmA"/>
    <property type="match status" value="1"/>
</dbReference>
<dbReference type="FunFam" id="3.40.50.620:FF:000115">
    <property type="entry name" value="tRNA-specific 2-thiouridylase MnmA"/>
    <property type="match status" value="1"/>
</dbReference>
<dbReference type="Gene3D" id="2.30.30.280">
    <property type="entry name" value="Adenine nucleotide alpha hydrolases-like domains"/>
    <property type="match status" value="1"/>
</dbReference>
<dbReference type="Gene3D" id="3.40.50.620">
    <property type="entry name" value="HUPs"/>
    <property type="match status" value="1"/>
</dbReference>
<dbReference type="Gene3D" id="2.40.30.10">
    <property type="entry name" value="Translation factors"/>
    <property type="match status" value="1"/>
</dbReference>
<dbReference type="HAMAP" id="MF_00144">
    <property type="entry name" value="tRNA_thiouridyl_MnmA"/>
    <property type="match status" value="1"/>
</dbReference>
<dbReference type="InterPro" id="IPR004506">
    <property type="entry name" value="MnmA-like"/>
</dbReference>
<dbReference type="InterPro" id="IPR046885">
    <property type="entry name" value="MnmA-like_C"/>
</dbReference>
<dbReference type="InterPro" id="IPR046884">
    <property type="entry name" value="MnmA-like_central"/>
</dbReference>
<dbReference type="InterPro" id="IPR023382">
    <property type="entry name" value="MnmA-like_central_sf"/>
</dbReference>
<dbReference type="InterPro" id="IPR014729">
    <property type="entry name" value="Rossmann-like_a/b/a_fold"/>
</dbReference>
<dbReference type="NCBIfam" id="NF001138">
    <property type="entry name" value="PRK00143.1"/>
    <property type="match status" value="1"/>
</dbReference>
<dbReference type="NCBIfam" id="TIGR00420">
    <property type="entry name" value="trmU"/>
    <property type="match status" value="1"/>
</dbReference>
<dbReference type="PANTHER" id="PTHR11933:SF5">
    <property type="entry name" value="MITOCHONDRIAL TRNA-SPECIFIC 2-THIOURIDYLASE 1"/>
    <property type="match status" value="1"/>
</dbReference>
<dbReference type="PANTHER" id="PTHR11933">
    <property type="entry name" value="TRNA 5-METHYLAMINOMETHYL-2-THIOURIDYLATE -METHYLTRANSFERASE"/>
    <property type="match status" value="1"/>
</dbReference>
<dbReference type="Pfam" id="PF03054">
    <property type="entry name" value="tRNA_Me_trans"/>
    <property type="match status" value="1"/>
</dbReference>
<dbReference type="Pfam" id="PF20258">
    <property type="entry name" value="tRNA_Me_trans_C"/>
    <property type="match status" value="1"/>
</dbReference>
<dbReference type="Pfam" id="PF20259">
    <property type="entry name" value="tRNA_Me_trans_M"/>
    <property type="match status" value="1"/>
</dbReference>
<dbReference type="SUPFAM" id="SSF52402">
    <property type="entry name" value="Adenine nucleotide alpha hydrolases-like"/>
    <property type="match status" value="1"/>
</dbReference>
<sequence length="380" mass="42184">MTAFPAAPDLAPPSRAAQGERVLCAMSGGVDSSVTASLLKEQGYQVIGAMMRFWPDDKRTDTFDSCCSPDAAYEARRVAEQVGVPFYLLDYREPFQRHIVGPFLEEYARGRTPNPCVNCNTKVKFDELVKKAKMLGCRYVATGHYVKRVDNAQGEVEFHRGDDPRKDQTYFLWGTPRDALPYILFPVGELEKPQVREIAAERGLLTAQKPESQNICFVPGKVQDFVAEHLPQAQGYIREIATGEVVGEHLGTQFYTLGQKKGLGLYQSHRVRHVVHLDPDSNTVWVGDYDDCLWTGLKATDANYLLDLAELPTELEVQVRYRTAPVKAHVLHADAEGFELEFAEPQFAVAPGQSAVLYAGSRLLGGGLIADHARELPALT</sequence>
<gene>
    <name evidence="1" type="primary">mnmA</name>
    <name type="synonym">trmU</name>
    <name type="ordered locus">DR_1759</name>
</gene>
<keyword id="KW-0067">ATP-binding</keyword>
<keyword id="KW-0963">Cytoplasm</keyword>
<keyword id="KW-1015">Disulfide bond</keyword>
<keyword id="KW-0547">Nucleotide-binding</keyword>
<keyword id="KW-1185">Reference proteome</keyword>
<keyword id="KW-0694">RNA-binding</keyword>
<keyword id="KW-0808">Transferase</keyword>
<keyword id="KW-0819">tRNA processing</keyword>
<keyword id="KW-0820">tRNA-binding</keyword>